<organism>
    <name type="scientific">Syntrophus aciditrophicus (strain SB)</name>
    <dbReference type="NCBI Taxonomy" id="56780"/>
    <lineage>
        <taxon>Bacteria</taxon>
        <taxon>Pseudomonadati</taxon>
        <taxon>Thermodesulfobacteriota</taxon>
        <taxon>Syntrophia</taxon>
        <taxon>Syntrophales</taxon>
        <taxon>Syntrophaceae</taxon>
        <taxon>Syntrophus</taxon>
    </lineage>
</organism>
<sequence>MLKAIVTGGGGKMGARIISLLEEEGGMQLTGVVEKKDHPAAGKDIGEFLGSGKRGIVIQSDLGFCIAGGDVIIDFTSHEASMRHMEMAAEHKRPIVIGSTGFSADEMDRIRKFAQNVPCVLAPNMSVGVNVMFKLLKIVAETLGDDYDVEILEVHHRLKKDAPSGTALKMAQVVAEALGRELDEVGIYERKGLIGERSKKEIGIQALRAGDIVGEHTVIFGAVGERLELIHRAHSRDNFARGAIRAAKWVVRQEPGLYDMQDVLGFRS</sequence>
<gene>
    <name evidence="1" type="primary">dapB</name>
    <name type="ordered locus">SYNAS_14340</name>
    <name type="ORF">SYN_02162</name>
</gene>
<reference key="1">
    <citation type="journal article" date="2007" name="Proc. Natl. Acad. Sci. U.S.A.">
        <title>The genome of Syntrophus aciditrophicus: life at the thermodynamic limit of microbial growth.</title>
        <authorList>
            <person name="McInerney M.J."/>
            <person name="Rohlin L."/>
            <person name="Mouttaki H."/>
            <person name="Kim U."/>
            <person name="Krupp R.S."/>
            <person name="Rios-Hernandez L."/>
            <person name="Sieber J."/>
            <person name="Struchtemeyer C.G."/>
            <person name="Bhattacharyya A."/>
            <person name="Campbell J.W."/>
            <person name="Gunsalus R.P."/>
        </authorList>
    </citation>
    <scope>NUCLEOTIDE SEQUENCE [LARGE SCALE GENOMIC DNA]</scope>
    <source>
        <strain>SB</strain>
    </source>
</reference>
<proteinExistence type="inferred from homology"/>
<protein>
    <recommendedName>
        <fullName evidence="1">4-hydroxy-tetrahydrodipicolinate reductase</fullName>
        <shortName evidence="1">HTPA reductase</shortName>
        <ecNumber evidence="1">1.17.1.8</ecNumber>
    </recommendedName>
</protein>
<accession>Q2LTA0</accession>
<dbReference type="EC" id="1.17.1.8" evidence="1"/>
<dbReference type="EMBL" id="CP000252">
    <property type="protein sequence ID" value="ABC77313.1"/>
    <property type="molecule type" value="Genomic_DNA"/>
</dbReference>
<dbReference type="RefSeq" id="WP_011417335.1">
    <property type="nucleotide sequence ID" value="NC_007759.1"/>
</dbReference>
<dbReference type="SMR" id="Q2LTA0"/>
<dbReference type="FunCoup" id="Q2LTA0">
    <property type="interactions" value="462"/>
</dbReference>
<dbReference type="STRING" id="56780.SYN_02162"/>
<dbReference type="KEGG" id="sat:SYN_02162"/>
<dbReference type="eggNOG" id="COG0289">
    <property type="taxonomic scope" value="Bacteria"/>
</dbReference>
<dbReference type="HOGENOM" id="CLU_047479_2_1_7"/>
<dbReference type="InParanoid" id="Q2LTA0"/>
<dbReference type="OrthoDB" id="9790352at2"/>
<dbReference type="UniPathway" id="UPA00034">
    <property type="reaction ID" value="UER00018"/>
</dbReference>
<dbReference type="Proteomes" id="UP000001933">
    <property type="component" value="Chromosome"/>
</dbReference>
<dbReference type="GO" id="GO:0005829">
    <property type="term" value="C:cytosol"/>
    <property type="evidence" value="ECO:0007669"/>
    <property type="project" value="TreeGrafter"/>
</dbReference>
<dbReference type="GO" id="GO:0008839">
    <property type="term" value="F:4-hydroxy-tetrahydrodipicolinate reductase"/>
    <property type="evidence" value="ECO:0007669"/>
    <property type="project" value="UniProtKB-EC"/>
</dbReference>
<dbReference type="GO" id="GO:0051287">
    <property type="term" value="F:NAD binding"/>
    <property type="evidence" value="ECO:0007669"/>
    <property type="project" value="UniProtKB-UniRule"/>
</dbReference>
<dbReference type="GO" id="GO:0050661">
    <property type="term" value="F:NADP binding"/>
    <property type="evidence" value="ECO:0007669"/>
    <property type="project" value="UniProtKB-UniRule"/>
</dbReference>
<dbReference type="GO" id="GO:0016726">
    <property type="term" value="F:oxidoreductase activity, acting on CH or CH2 groups, NAD or NADP as acceptor"/>
    <property type="evidence" value="ECO:0007669"/>
    <property type="project" value="UniProtKB-UniRule"/>
</dbReference>
<dbReference type="GO" id="GO:0019877">
    <property type="term" value="P:diaminopimelate biosynthetic process"/>
    <property type="evidence" value="ECO:0007669"/>
    <property type="project" value="UniProtKB-UniRule"/>
</dbReference>
<dbReference type="GO" id="GO:0009089">
    <property type="term" value="P:lysine biosynthetic process via diaminopimelate"/>
    <property type="evidence" value="ECO:0007669"/>
    <property type="project" value="UniProtKB-UniRule"/>
</dbReference>
<dbReference type="CDD" id="cd02274">
    <property type="entry name" value="DHDPR_N"/>
    <property type="match status" value="1"/>
</dbReference>
<dbReference type="FunFam" id="3.30.360.10:FF:000004">
    <property type="entry name" value="4-hydroxy-tetrahydrodipicolinate reductase"/>
    <property type="match status" value="1"/>
</dbReference>
<dbReference type="Gene3D" id="3.30.360.10">
    <property type="entry name" value="Dihydrodipicolinate Reductase, domain 2"/>
    <property type="match status" value="1"/>
</dbReference>
<dbReference type="Gene3D" id="3.40.50.720">
    <property type="entry name" value="NAD(P)-binding Rossmann-like Domain"/>
    <property type="match status" value="1"/>
</dbReference>
<dbReference type="HAMAP" id="MF_00102">
    <property type="entry name" value="DapB"/>
    <property type="match status" value="1"/>
</dbReference>
<dbReference type="InterPro" id="IPR022663">
    <property type="entry name" value="DapB_C"/>
</dbReference>
<dbReference type="InterPro" id="IPR000846">
    <property type="entry name" value="DapB_N"/>
</dbReference>
<dbReference type="InterPro" id="IPR022664">
    <property type="entry name" value="DapB_N_CS"/>
</dbReference>
<dbReference type="InterPro" id="IPR023940">
    <property type="entry name" value="DHDPR_bac"/>
</dbReference>
<dbReference type="InterPro" id="IPR036291">
    <property type="entry name" value="NAD(P)-bd_dom_sf"/>
</dbReference>
<dbReference type="NCBIfam" id="TIGR00036">
    <property type="entry name" value="dapB"/>
    <property type="match status" value="1"/>
</dbReference>
<dbReference type="PANTHER" id="PTHR20836:SF0">
    <property type="entry name" value="4-HYDROXY-TETRAHYDRODIPICOLINATE REDUCTASE 1, CHLOROPLASTIC-RELATED"/>
    <property type="match status" value="1"/>
</dbReference>
<dbReference type="PANTHER" id="PTHR20836">
    <property type="entry name" value="DIHYDRODIPICOLINATE REDUCTASE"/>
    <property type="match status" value="1"/>
</dbReference>
<dbReference type="Pfam" id="PF05173">
    <property type="entry name" value="DapB_C"/>
    <property type="match status" value="1"/>
</dbReference>
<dbReference type="Pfam" id="PF01113">
    <property type="entry name" value="DapB_N"/>
    <property type="match status" value="1"/>
</dbReference>
<dbReference type="PIRSF" id="PIRSF000161">
    <property type="entry name" value="DHPR"/>
    <property type="match status" value="1"/>
</dbReference>
<dbReference type="SUPFAM" id="SSF55347">
    <property type="entry name" value="Glyceraldehyde-3-phosphate dehydrogenase-like, C-terminal domain"/>
    <property type="match status" value="1"/>
</dbReference>
<dbReference type="SUPFAM" id="SSF51735">
    <property type="entry name" value="NAD(P)-binding Rossmann-fold domains"/>
    <property type="match status" value="1"/>
</dbReference>
<dbReference type="PROSITE" id="PS01298">
    <property type="entry name" value="DAPB"/>
    <property type="match status" value="1"/>
</dbReference>
<name>DAPB_SYNAS</name>
<keyword id="KW-0028">Amino-acid biosynthesis</keyword>
<keyword id="KW-0963">Cytoplasm</keyword>
<keyword id="KW-0220">Diaminopimelate biosynthesis</keyword>
<keyword id="KW-0457">Lysine biosynthesis</keyword>
<keyword id="KW-0520">NAD</keyword>
<keyword id="KW-0521">NADP</keyword>
<keyword id="KW-0560">Oxidoreductase</keyword>
<keyword id="KW-1185">Reference proteome</keyword>
<comment type="function">
    <text evidence="1">Catalyzes the conversion of 4-hydroxy-tetrahydrodipicolinate (HTPA) to tetrahydrodipicolinate.</text>
</comment>
<comment type="catalytic activity">
    <reaction evidence="1">
        <text>(S)-2,3,4,5-tetrahydrodipicolinate + NAD(+) + H2O = (2S,4S)-4-hydroxy-2,3,4,5-tetrahydrodipicolinate + NADH + H(+)</text>
        <dbReference type="Rhea" id="RHEA:35323"/>
        <dbReference type="ChEBI" id="CHEBI:15377"/>
        <dbReference type="ChEBI" id="CHEBI:15378"/>
        <dbReference type="ChEBI" id="CHEBI:16845"/>
        <dbReference type="ChEBI" id="CHEBI:57540"/>
        <dbReference type="ChEBI" id="CHEBI:57945"/>
        <dbReference type="ChEBI" id="CHEBI:67139"/>
        <dbReference type="EC" id="1.17.1.8"/>
    </reaction>
</comment>
<comment type="catalytic activity">
    <reaction evidence="1">
        <text>(S)-2,3,4,5-tetrahydrodipicolinate + NADP(+) + H2O = (2S,4S)-4-hydroxy-2,3,4,5-tetrahydrodipicolinate + NADPH + H(+)</text>
        <dbReference type="Rhea" id="RHEA:35331"/>
        <dbReference type="ChEBI" id="CHEBI:15377"/>
        <dbReference type="ChEBI" id="CHEBI:15378"/>
        <dbReference type="ChEBI" id="CHEBI:16845"/>
        <dbReference type="ChEBI" id="CHEBI:57783"/>
        <dbReference type="ChEBI" id="CHEBI:58349"/>
        <dbReference type="ChEBI" id="CHEBI:67139"/>
        <dbReference type="EC" id="1.17.1.8"/>
    </reaction>
</comment>
<comment type="pathway">
    <text evidence="1">Amino-acid biosynthesis; L-lysine biosynthesis via DAP pathway; (S)-tetrahydrodipicolinate from L-aspartate: step 4/4.</text>
</comment>
<comment type="subcellular location">
    <subcellularLocation>
        <location evidence="1">Cytoplasm</location>
    </subcellularLocation>
</comment>
<comment type="similarity">
    <text evidence="1">Belongs to the DapB family.</text>
</comment>
<comment type="caution">
    <text evidence="2">Was originally thought to be a dihydrodipicolinate reductase (DHDPR), catalyzing the conversion of dihydrodipicolinate to tetrahydrodipicolinate. However, it was shown in E.coli that the substrate of the enzymatic reaction is not dihydrodipicolinate (DHDP) but in fact (2S,4S)-4-hydroxy-2,3,4,5-tetrahydrodipicolinic acid (HTPA), the product released by the DapA-catalyzed reaction.</text>
</comment>
<evidence type="ECO:0000255" key="1">
    <source>
        <dbReference type="HAMAP-Rule" id="MF_00102"/>
    </source>
</evidence>
<evidence type="ECO:0000305" key="2"/>
<feature type="chain" id="PRO_1000008651" description="4-hydroxy-tetrahydrodipicolinate reductase">
    <location>
        <begin position="1"/>
        <end position="268"/>
    </location>
</feature>
<feature type="active site" description="Proton donor/acceptor" evidence="1">
    <location>
        <position position="155"/>
    </location>
</feature>
<feature type="active site" description="Proton donor" evidence="1">
    <location>
        <position position="159"/>
    </location>
</feature>
<feature type="binding site" evidence="1">
    <location>
        <begin position="8"/>
        <end position="13"/>
    </location>
    <ligand>
        <name>NAD(+)</name>
        <dbReference type="ChEBI" id="CHEBI:57540"/>
    </ligand>
</feature>
<feature type="binding site" evidence="1">
    <location>
        <position position="34"/>
    </location>
    <ligand>
        <name>NAD(+)</name>
        <dbReference type="ChEBI" id="CHEBI:57540"/>
    </ligand>
</feature>
<feature type="binding site" evidence="1">
    <location>
        <position position="35"/>
    </location>
    <ligand>
        <name>NADP(+)</name>
        <dbReference type="ChEBI" id="CHEBI:58349"/>
    </ligand>
</feature>
<feature type="binding site" evidence="1">
    <location>
        <begin position="98"/>
        <end position="100"/>
    </location>
    <ligand>
        <name>NAD(+)</name>
        <dbReference type="ChEBI" id="CHEBI:57540"/>
    </ligand>
</feature>
<feature type="binding site" evidence="1">
    <location>
        <begin position="122"/>
        <end position="125"/>
    </location>
    <ligand>
        <name>NAD(+)</name>
        <dbReference type="ChEBI" id="CHEBI:57540"/>
    </ligand>
</feature>
<feature type="binding site" evidence="1">
    <location>
        <position position="156"/>
    </location>
    <ligand>
        <name>(S)-2,3,4,5-tetrahydrodipicolinate</name>
        <dbReference type="ChEBI" id="CHEBI:16845"/>
    </ligand>
</feature>
<feature type="binding site" evidence="1">
    <location>
        <begin position="165"/>
        <end position="166"/>
    </location>
    <ligand>
        <name>(S)-2,3,4,5-tetrahydrodipicolinate</name>
        <dbReference type="ChEBI" id="CHEBI:16845"/>
    </ligand>
</feature>